<gene>
    <name type="primary">4</name>
</gene>
<proteinExistence type="predicted"/>
<accession>Q9JGT8</accession>
<reference key="1">
    <citation type="journal article" date="2000" name="Arch. Virol.">
        <title>Complete nucleotide sequence of Northern cereal mosaic virus and its genome organization.</title>
        <authorList>
            <person name="Tanno F."/>
            <person name="Nakatsu A."/>
            <person name="Toriyama S."/>
            <person name="Kojima M."/>
        </authorList>
    </citation>
    <scope>NUCLEOTIDE SEQUENCE [GENOMIC RNA]</scope>
</reference>
<dbReference type="EMBL" id="AB030277">
    <property type="protein sequence ID" value="BAA95347.1"/>
    <property type="molecule type" value="Genomic_RNA"/>
</dbReference>
<dbReference type="RefSeq" id="NP_057957.1">
    <property type="nucleotide sequence ID" value="NC_002251.1"/>
</dbReference>
<dbReference type="GeneID" id="1457719"/>
<dbReference type="KEGG" id="vg:1457719"/>
<dbReference type="Proteomes" id="UP000007785">
    <property type="component" value="Genome"/>
</dbReference>
<feature type="chain" id="PRO_0000299214" description="Protein 4">
    <location>
        <begin position="1"/>
        <end position="114"/>
    </location>
</feature>
<organismHost>
    <name type="scientific">Hordeum vulgare</name>
    <name type="common">Barley</name>
    <dbReference type="NCBI Taxonomy" id="4513"/>
</organismHost>
<organism>
    <name type="scientific">Northern cereal mosaic virus</name>
    <name type="common">NCMV</name>
    <dbReference type="NCBI Taxonomy" id="1985704"/>
    <lineage>
        <taxon>Viruses</taxon>
        <taxon>Riboviria</taxon>
        <taxon>Orthornavirae</taxon>
        <taxon>Negarnaviricota</taxon>
        <taxon>Haploviricotina</taxon>
        <taxon>Monjiviricetes</taxon>
        <taxon>Mononegavirales</taxon>
        <taxon>Rhabdoviridae</taxon>
        <taxon>Betarhabdovirinae</taxon>
        <taxon>Cytorhabdovirus</taxon>
    </lineage>
</organism>
<name>VP4_NCMV</name>
<protein>
    <recommendedName>
        <fullName>Protein 4</fullName>
    </recommendedName>
</protein>
<keyword id="KW-1185">Reference proteome</keyword>
<sequence>MPCCVIKGYASANQIVEGQVLKEGCRVRFMWDQKGISWGMSLSPEGGLSFRLVPERHVQSYLKRLMITVGDDQSSFVTMTSECRISMFLFKVSISVGTLPDVVVPVERLEKLSI</sequence>